<comment type="function">
    <text evidence="1">Golgi membrane protein involved in vesicular trafficking.</text>
</comment>
<comment type="subcellular location">
    <subcellularLocation>
        <location evidence="1">Golgi apparatus membrane</location>
        <topology evidence="1">Multi-pass membrane protein</topology>
    </subcellularLocation>
</comment>
<comment type="similarity">
    <text evidence="3">Belongs to the TVP23 family.</text>
</comment>
<protein>
    <recommendedName>
        <fullName>Golgi apparatus membrane protein tvp23</fullName>
    </recommendedName>
</protein>
<organism>
    <name type="scientific">Schizosaccharomyces pombe (strain 972 / ATCC 24843)</name>
    <name type="common">Fission yeast</name>
    <dbReference type="NCBI Taxonomy" id="284812"/>
    <lineage>
        <taxon>Eukaryota</taxon>
        <taxon>Fungi</taxon>
        <taxon>Dikarya</taxon>
        <taxon>Ascomycota</taxon>
        <taxon>Taphrinomycotina</taxon>
        <taxon>Schizosaccharomycetes</taxon>
        <taxon>Schizosaccharomycetales</taxon>
        <taxon>Schizosaccharomycetaceae</taxon>
        <taxon>Schizosaccharomyces</taxon>
    </lineage>
</organism>
<feature type="chain" id="PRO_0000212836" description="Golgi apparatus membrane protein tvp23">
    <location>
        <begin position="1"/>
        <end position="219"/>
    </location>
</feature>
<feature type="transmembrane region" description="Helical" evidence="2">
    <location>
        <begin position="41"/>
        <end position="61"/>
    </location>
</feature>
<feature type="transmembrane region" description="Helical" evidence="2">
    <location>
        <begin position="62"/>
        <end position="82"/>
    </location>
</feature>
<feature type="transmembrane region" description="Helical" evidence="2">
    <location>
        <begin position="137"/>
        <end position="157"/>
    </location>
</feature>
<feature type="transmembrane region" description="Helical" evidence="2">
    <location>
        <begin position="161"/>
        <end position="181"/>
    </location>
</feature>
<feature type="glycosylation site" description="N-linked (GlcNAc...) asparagine" evidence="2">
    <location>
        <position position="34"/>
    </location>
</feature>
<feature type="glycosylation site" description="N-linked (GlcNAc...) asparagine" evidence="2">
    <location>
        <position position="95"/>
    </location>
</feature>
<feature type="glycosylation site" description="N-linked (GlcNAc...) asparagine" evidence="2">
    <location>
        <position position="108"/>
    </location>
</feature>
<feature type="glycosylation site" description="N-linked (GlcNAc...) asparagine" evidence="2">
    <location>
        <position position="200"/>
    </location>
</feature>
<evidence type="ECO:0000250" key="1"/>
<evidence type="ECO:0000255" key="2"/>
<evidence type="ECO:0000305" key="3"/>
<accession>Q9Y7K7</accession>
<name>TVP23_SCHPO</name>
<proteinExistence type="inferred from homology"/>
<sequence length="219" mass="25233">MFTSLDRNLYVDNHITLTKMDYQNTETIAEQERNASRLPQMFQMSSHPVALFFFLLFRTGAIVAYILGMFFTSSFMLLFIVIFTLLAVDLWTVKNVSGRLLVGLRWRNETGVDGESIWIFESADPSRPRNAVDQKTFWYALYLYPFIWIILGIVAIIRFEFLWLALVAVAIGLTSVNTAAYSRCDKDAKRRWATELADSNSSGFVSRFLSRAFIKRFIG</sequence>
<keyword id="KW-0325">Glycoprotein</keyword>
<keyword id="KW-0333">Golgi apparatus</keyword>
<keyword id="KW-0472">Membrane</keyword>
<keyword id="KW-1185">Reference proteome</keyword>
<keyword id="KW-0812">Transmembrane</keyword>
<keyword id="KW-1133">Transmembrane helix</keyword>
<gene>
    <name type="primary">tvp23</name>
    <name type="ORF">SPBC2A9.05c</name>
</gene>
<reference key="1">
    <citation type="journal article" date="2002" name="Nature">
        <title>The genome sequence of Schizosaccharomyces pombe.</title>
        <authorList>
            <person name="Wood V."/>
            <person name="Gwilliam R."/>
            <person name="Rajandream M.A."/>
            <person name="Lyne M.H."/>
            <person name="Lyne R."/>
            <person name="Stewart A."/>
            <person name="Sgouros J.G."/>
            <person name="Peat N."/>
            <person name="Hayles J."/>
            <person name="Baker S.G."/>
            <person name="Basham D."/>
            <person name="Bowman S."/>
            <person name="Brooks K."/>
            <person name="Brown D."/>
            <person name="Brown S."/>
            <person name="Chillingworth T."/>
            <person name="Churcher C.M."/>
            <person name="Collins M."/>
            <person name="Connor R."/>
            <person name="Cronin A."/>
            <person name="Davis P."/>
            <person name="Feltwell T."/>
            <person name="Fraser A."/>
            <person name="Gentles S."/>
            <person name="Goble A."/>
            <person name="Hamlin N."/>
            <person name="Harris D.E."/>
            <person name="Hidalgo J."/>
            <person name="Hodgson G."/>
            <person name="Holroyd S."/>
            <person name="Hornsby T."/>
            <person name="Howarth S."/>
            <person name="Huckle E.J."/>
            <person name="Hunt S."/>
            <person name="Jagels K."/>
            <person name="James K.D."/>
            <person name="Jones L."/>
            <person name="Jones M."/>
            <person name="Leather S."/>
            <person name="McDonald S."/>
            <person name="McLean J."/>
            <person name="Mooney P."/>
            <person name="Moule S."/>
            <person name="Mungall K.L."/>
            <person name="Murphy L.D."/>
            <person name="Niblett D."/>
            <person name="Odell C."/>
            <person name="Oliver K."/>
            <person name="O'Neil S."/>
            <person name="Pearson D."/>
            <person name="Quail M.A."/>
            <person name="Rabbinowitsch E."/>
            <person name="Rutherford K.M."/>
            <person name="Rutter S."/>
            <person name="Saunders D."/>
            <person name="Seeger K."/>
            <person name="Sharp S."/>
            <person name="Skelton J."/>
            <person name="Simmonds M.N."/>
            <person name="Squares R."/>
            <person name="Squares S."/>
            <person name="Stevens K."/>
            <person name="Taylor K."/>
            <person name="Taylor R.G."/>
            <person name="Tivey A."/>
            <person name="Walsh S.V."/>
            <person name="Warren T."/>
            <person name="Whitehead S."/>
            <person name="Woodward J.R."/>
            <person name="Volckaert G."/>
            <person name="Aert R."/>
            <person name="Robben J."/>
            <person name="Grymonprez B."/>
            <person name="Weltjens I."/>
            <person name="Vanstreels E."/>
            <person name="Rieger M."/>
            <person name="Schaefer M."/>
            <person name="Mueller-Auer S."/>
            <person name="Gabel C."/>
            <person name="Fuchs M."/>
            <person name="Duesterhoeft A."/>
            <person name="Fritzc C."/>
            <person name="Holzer E."/>
            <person name="Moestl D."/>
            <person name="Hilbert H."/>
            <person name="Borzym K."/>
            <person name="Langer I."/>
            <person name="Beck A."/>
            <person name="Lehrach H."/>
            <person name="Reinhardt R."/>
            <person name="Pohl T.M."/>
            <person name="Eger P."/>
            <person name="Zimmermann W."/>
            <person name="Wedler H."/>
            <person name="Wambutt R."/>
            <person name="Purnelle B."/>
            <person name="Goffeau A."/>
            <person name="Cadieu E."/>
            <person name="Dreano S."/>
            <person name="Gloux S."/>
            <person name="Lelaure V."/>
            <person name="Mottier S."/>
            <person name="Galibert F."/>
            <person name="Aves S.J."/>
            <person name="Xiang Z."/>
            <person name="Hunt C."/>
            <person name="Moore K."/>
            <person name="Hurst S.M."/>
            <person name="Lucas M."/>
            <person name="Rochet M."/>
            <person name="Gaillardin C."/>
            <person name="Tallada V.A."/>
            <person name="Garzon A."/>
            <person name="Thode G."/>
            <person name="Daga R.R."/>
            <person name="Cruzado L."/>
            <person name="Jimenez J."/>
            <person name="Sanchez M."/>
            <person name="del Rey F."/>
            <person name="Benito J."/>
            <person name="Dominguez A."/>
            <person name="Revuelta J.L."/>
            <person name="Moreno S."/>
            <person name="Armstrong J."/>
            <person name="Forsburg S.L."/>
            <person name="Cerutti L."/>
            <person name="Lowe T."/>
            <person name="McCombie W.R."/>
            <person name="Paulsen I."/>
            <person name="Potashkin J."/>
            <person name="Shpakovski G.V."/>
            <person name="Ussery D."/>
            <person name="Barrell B.G."/>
            <person name="Nurse P."/>
        </authorList>
    </citation>
    <scope>NUCLEOTIDE SEQUENCE [LARGE SCALE GENOMIC DNA]</scope>
    <source>
        <strain>972 / ATCC 24843</strain>
    </source>
</reference>
<dbReference type="EMBL" id="CU329671">
    <property type="protein sequence ID" value="CAB39847.1"/>
    <property type="molecule type" value="Genomic_DNA"/>
</dbReference>
<dbReference type="PIR" id="T40096">
    <property type="entry name" value="T40096"/>
</dbReference>
<dbReference type="RefSeq" id="NP_596214.1">
    <property type="nucleotide sequence ID" value="NM_001022133.2"/>
</dbReference>
<dbReference type="BioGRID" id="276862">
    <property type="interactions" value="2"/>
</dbReference>
<dbReference type="FunCoup" id="Q9Y7K7">
    <property type="interactions" value="151"/>
</dbReference>
<dbReference type="STRING" id="284812.Q9Y7K7"/>
<dbReference type="GlyCosmos" id="Q9Y7K7">
    <property type="glycosylation" value="4 sites, No reported glycans"/>
</dbReference>
<dbReference type="PaxDb" id="4896-SPBC2A9.05c.1"/>
<dbReference type="EnsemblFungi" id="SPBC2A9.05c.1">
    <property type="protein sequence ID" value="SPBC2A9.05c.1:pep"/>
    <property type="gene ID" value="SPBC2A9.05c"/>
</dbReference>
<dbReference type="GeneID" id="2540332"/>
<dbReference type="KEGG" id="spo:2540332"/>
<dbReference type="PomBase" id="SPBC2A9.05c">
    <property type="gene designation" value="tvp23"/>
</dbReference>
<dbReference type="VEuPathDB" id="FungiDB:SPBC2A9.05c"/>
<dbReference type="eggNOG" id="KOG3195">
    <property type="taxonomic scope" value="Eukaryota"/>
</dbReference>
<dbReference type="HOGENOM" id="CLU_074845_0_0_1"/>
<dbReference type="InParanoid" id="Q9Y7K7"/>
<dbReference type="OMA" id="KMIWWID"/>
<dbReference type="PhylomeDB" id="Q9Y7K7"/>
<dbReference type="PRO" id="PR:Q9Y7K7"/>
<dbReference type="Proteomes" id="UP000002485">
    <property type="component" value="Chromosome II"/>
</dbReference>
<dbReference type="GO" id="GO:0005783">
    <property type="term" value="C:endoplasmic reticulum"/>
    <property type="evidence" value="ECO:0007005"/>
    <property type="project" value="PomBase"/>
</dbReference>
<dbReference type="GO" id="GO:0005794">
    <property type="term" value="C:Golgi apparatus"/>
    <property type="evidence" value="ECO:0007005"/>
    <property type="project" value="PomBase"/>
</dbReference>
<dbReference type="GO" id="GO:0000139">
    <property type="term" value="C:Golgi membrane"/>
    <property type="evidence" value="ECO:0000318"/>
    <property type="project" value="GO_Central"/>
</dbReference>
<dbReference type="GO" id="GO:0009306">
    <property type="term" value="P:protein secretion"/>
    <property type="evidence" value="ECO:0000318"/>
    <property type="project" value="GO_Central"/>
</dbReference>
<dbReference type="GO" id="GO:0016192">
    <property type="term" value="P:vesicle-mediated transport"/>
    <property type="evidence" value="ECO:0000318"/>
    <property type="project" value="GO_Central"/>
</dbReference>
<dbReference type="InterPro" id="IPR008564">
    <property type="entry name" value="TVP23-like"/>
</dbReference>
<dbReference type="PANTHER" id="PTHR13019">
    <property type="entry name" value="GOLGI APPARATUS MEMBRANE PROTEIN TVP23"/>
    <property type="match status" value="1"/>
</dbReference>
<dbReference type="PANTHER" id="PTHR13019:SF7">
    <property type="entry name" value="GOLGI APPARATUS MEMBRANE PROTEIN TVP23"/>
    <property type="match status" value="1"/>
</dbReference>
<dbReference type="Pfam" id="PF05832">
    <property type="entry name" value="DUF846"/>
    <property type="match status" value="1"/>
</dbReference>